<name>PYRE_XANE5</name>
<organism>
    <name type="scientific">Xanthomonas euvesicatoria pv. vesicatoria (strain 85-10)</name>
    <name type="common">Xanthomonas campestris pv. vesicatoria</name>
    <dbReference type="NCBI Taxonomy" id="316273"/>
    <lineage>
        <taxon>Bacteria</taxon>
        <taxon>Pseudomonadati</taxon>
        <taxon>Pseudomonadota</taxon>
        <taxon>Gammaproteobacteria</taxon>
        <taxon>Lysobacterales</taxon>
        <taxon>Lysobacteraceae</taxon>
        <taxon>Xanthomonas</taxon>
    </lineage>
</organism>
<reference key="1">
    <citation type="journal article" date="2005" name="J. Bacteriol.">
        <title>Insights into genome plasticity and pathogenicity of the plant pathogenic Bacterium Xanthomonas campestris pv. vesicatoria revealed by the complete genome sequence.</title>
        <authorList>
            <person name="Thieme F."/>
            <person name="Koebnik R."/>
            <person name="Bekel T."/>
            <person name="Berger C."/>
            <person name="Boch J."/>
            <person name="Buettner D."/>
            <person name="Caldana C."/>
            <person name="Gaigalat L."/>
            <person name="Goesmann A."/>
            <person name="Kay S."/>
            <person name="Kirchner O."/>
            <person name="Lanz C."/>
            <person name="Linke B."/>
            <person name="McHardy A.C."/>
            <person name="Meyer F."/>
            <person name="Mittenhuber G."/>
            <person name="Nies D.H."/>
            <person name="Niesbach-Kloesgen U."/>
            <person name="Patschkowski T."/>
            <person name="Rueckert C."/>
            <person name="Rupp O."/>
            <person name="Schneiker S."/>
            <person name="Schuster S.C."/>
            <person name="Vorhoelter F.J."/>
            <person name="Weber E."/>
            <person name="Puehler A."/>
            <person name="Bonas U."/>
            <person name="Bartels D."/>
            <person name="Kaiser O."/>
        </authorList>
    </citation>
    <scope>NUCLEOTIDE SEQUENCE [LARGE SCALE GENOMIC DNA]</scope>
    <source>
        <strain>85-10</strain>
    </source>
</reference>
<comment type="function">
    <text evidence="1">Catalyzes the transfer of a ribosyl phosphate group from 5-phosphoribose 1-diphosphate to orotate, leading to the formation of orotidine monophosphate (OMP).</text>
</comment>
<comment type="catalytic activity">
    <reaction evidence="1">
        <text>orotidine 5'-phosphate + diphosphate = orotate + 5-phospho-alpha-D-ribose 1-diphosphate</text>
        <dbReference type="Rhea" id="RHEA:10380"/>
        <dbReference type="ChEBI" id="CHEBI:30839"/>
        <dbReference type="ChEBI" id="CHEBI:33019"/>
        <dbReference type="ChEBI" id="CHEBI:57538"/>
        <dbReference type="ChEBI" id="CHEBI:58017"/>
        <dbReference type="EC" id="2.4.2.10"/>
    </reaction>
</comment>
<comment type="cofactor">
    <cofactor evidence="1">
        <name>Mg(2+)</name>
        <dbReference type="ChEBI" id="CHEBI:18420"/>
    </cofactor>
</comment>
<comment type="pathway">
    <text evidence="1">Pyrimidine metabolism; UMP biosynthesis via de novo pathway; UMP from orotate: step 1/2.</text>
</comment>
<comment type="subunit">
    <text evidence="1">Homodimer.</text>
</comment>
<comment type="similarity">
    <text evidence="1">Belongs to the purine/pyrimidine phosphoribosyltransferase family. PyrE subfamily.</text>
</comment>
<evidence type="ECO:0000255" key="1">
    <source>
        <dbReference type="HAMAP-Rule" id="MF_01208"/>
    </source>
</evidence>
<accession>Q3BNB6</accession>
<gene>
    <name evidence="1" type="primary">pyrE</name>
    <name type="ordered locus">XCV4016</name>
</gene>
<dbReference type="EC" id="2.4.2.10" evidence="1"/>
<dbReference type="EMBL" id="AM039952">
    <property type="protein sequence ID" value="CAJ25747.1"/>
    <property type="molecule type" value="Genomic_DNA"/>
</dbReference>
<dbReference type="RefSeq" id="WP_011348851.1">
    <property type="nucleotide sequence ID" value="NZ_CP017190.1"/>
</dbReference>
<dbReference type="SMR" id="Q3BNB6"/>
<dbReference type="STRING" id="456327.BJD11_02535"/>
<dbReference type="GeneID" id="97512080"/>
<dbReference type="KEGG" id="xcv:XCV4016"/>
<dbReference type="eggNOG" id="COG0461">
    <property type="taxonomic scope" value="Bacteria"/>
</dbReference>
<dbReference type="HOGENOM" id="CLU_074878_0_1_6"/>
<dbReference type="UniPathway" id="UPA00070">
    <property type="reaction ID" value="UER00119"/>
</dbReference>
<dbReference type="Proteomes" id="UP000007069">
    <property type="component" value="Chromosome"/>
</dbReference>
<dbReference type="GO" id="GO:0005737">
    <property type="term" value="C:cytoplasm"/>
    <property type="evidence" value="ECO:0007669"/>
    <property type="project" value="TreeGrafter"/>
</dbReference>
<dbReference type="GO" id="GO:0000287">
    <property type="term" value="F:magnesium ion binding"/>
    <property type="evidence" value="ECO:0007669"/>
    <property type="project" value="UniProtKB-UniRule"/>
</dbReference>
<dbReference type="GO" id="GO:0004588">
    <property type="term" value="F:orotate phosphoribosyltransferase activity"/>
    <property type="evidence" value="ECO:0007669"/>
    <property type="project" value="UniProtKB-UniRule"/>
</dbReference>
<dbReference type="GO" id="GO:0006207">
    <property type="term" value="P:'de novo' pyrimidine nucleobase biosynthetic process"/>
    <property type="evidence" value="ECO:0007669"/>
    <property type="project" value="TreeGrafter"/>
</dbReference>
<dbReference type="GO" id="GO:0044205">
    <property type="term" value="P:'de novo' UMP biosynthetic process"/>
    <property type="evidence" value="ECO:0007669"/>
    <property type="project" value="UniProtKB-UniRule"/>
</dbReference>
<dbReference type="GO" id="GO:0046132">
    <property type="term" value="P:pyrimidine ribonucleoside biosynthetic process"/>
    <property type="evidence" value="ECO:0007669"/>
    <property type="project" value="TreeGrafter"/>
</dbReference>
<dbReference type="CDD" id="cd06223">
    <property type="entry name" value="PRTases_typeI"/>
    <property type="match status" value="1"/>
</dbReference>
<dbReference type="FunFam" id="3.40.50.2020:FF:000052">
    <property type="entry name" value="Orotate phosphoribosyltransferase"/>
    <property type="match status" value="1"/>
</dbReference>
<dbReference type="Gene3D" id="3.40.50.2020">
    <property type="match status" value="1"/>
</dbReference>
<dbReference type="HAMAP" id="MF_01208">
    <property type="entry name" value="PyrE"/>
    <property type="match status" value="1"/>
</dbReference>
<dbReference type="InterPro" id="IPR023031">
    <property type="entry name" value="OPRT"/>
</dbReference>
<dbReference type="InterPro" id="IPR004467">
    <property type="entry name" value="Or_phspho_trans_dom"/>
</dbReference>
<dbReference type="InterPro" id="IPR000836">
    <property type="entry name" value="PRibTrfase_dom"/>
</dbReference>
<dbReference type="InterPro" id="IPR029057">
    <property type="entry name" value="PRTase-like"/>
</dbReference>
<dbReference type="NCBIfam" id="TIGR00336">
    <property type="entry name" value="pyrE"/>
    <property type="match status" value="1"/>
</dbReference>
<dbReference type="PANTHER" id="PTHR46683">
    <property type="entry name" value="OROTATE PHOSPHORIBOSYLTRANSFERASE 1-RELATED"/>
    <property type="match status" value="1"/>
</dbReference>
<dbReference type="PANTHER" id="PTHR46683:SF1">
    <property type="entry name" value="OROTATE PHOSPHORIBOSYLTRANSFERASE 1-RELATED"/>
    <property type="match status" value="1"/>
</dbReference>
<dbReference type="Pfam" id="PF00156">
    <property type="entry name" value="Pribosyltran"/>
    <property type="match status" value="1"/>
</dbReference>
<dbReference type="SUPFAM" id="SSF53271">
    <property type="entry name" value="PRTase-like"/>
    <property type="match status" value="1"/>
</dbReference>
<dbReference type="PROSITE" id="PS00103">
    <property type="entry name" value="PUR_PYR_PR_TRANSFER"/>
    <property type="match status" value="1"/>
</dbReference>
<feature type="chain" id="PRO_1000066324" description="Orotate phosphoribosyltransferase">
    <location>
        <begin position="1"/>
        <end position="219"/>
    </location>
</feature>
<feature type="binding site" description="in other chain" evidence="1">
    <location>
        <position position="26"/>
    </location>
    <ligand>
        <name>5-phospho-alpha-D-ribose 1-diphosphate</name>
        <dbReference type="ChEBI" id="CHEBI:58017"/>
        <note>ligand shared between dimeric partners</note>
    </ligand>
</feature>
<feature type="binding site" evidence="1">
    <location>
        <begin position="34"/>
        <end position="35"/>
    </location>
    <ligand>
        <name>orotate</name>
        <dbReference type="ChEBI" id="CHEBI:30839"/>
    </ligand>
</feature>
<feature type="binding site" description="in other chain" evidence="1">
    <location>
        <begin position="72"/>
        <end position="73"/>
    </location>
    <ligand>
        <name>5-phospho-alpha-D-ribose 1-diphosphate</name>
        <dbReference type="ChEBI" id="CHEBI:58017"/>
        <note>ligand shared between dimeric partners</note>
    </ligand>
</feature>
<feature type="binding site" evidence="1">
    <location>
        <position position="98"/>
    </location>
    <ligand>
        <name>5-phospho-alpha-D-ribose 1-diphosphate</name>
        <dbReference type="ChEBI" id="CHEBI:58017"/>
        <note>ligand shared between dimeric partners</note>
    </ligand>
</feature>
<feature type="binding site" description="in other chain" evidence="1">
    <location>
        <position position="99"/>
    </location>
    <ligand>
        <name>5-phospho-alpha-D-ribose 1-diphosphate</name>
        <dbReference type="ChEBI" id="CHEBI:58017"/>
        <note>ligand shared between dimeric partners</note>
    </ligand>
</feature>
<feature type="binding site" evidence="1">
    <location>
        <position position="102"/>
    </location>
    <ligand>
        <name>5-phospho-alpha-D-ribose 1-diphosphate</name>
        <dbReference type="ChEBI" id="CHEBI:58017"/>
        <note>ligand shared between dimeric partners</note>
    </ligand>
</feature>
<feature type="binding site" evidence="1">
    <location>
        <position position="104"/>
    </location>
    <ligand>
        <name>5-phospho-alpha-D-ribose 1-diphosphate</name>
        <dbReference type="ChEBI" id="CHEBI:58017"/>
        <note>ligand shared between dimeric partners</note>
    </ligand>
</feature>
<feature type="binding site" description="in other chain" evidence="1">
    <location>
        <begin position="124"/>
        <end position="132"/>
    </location>
    <ligand>
        <name>5-phospho-alpha-D-ribose 1-diphosphate</name>
        <dbReference type="ChEBI" id="CHEBI:58017"/>
        <note>ligand shared between dimeric partners</note>
    </ligand>
</feature>
<feature type="binding site" evidence="1">
    <location>
        <position position="128"/>
    </location>
    <ligand>
        <name>orotate</name>
        <dbReference type="ChEBI" id="CHEBI:30839"/>
    </ligand>
</feature>
<feature type="binding site" evidence="1">
    <location>
        <position position="156"/>
    </location>
    <ligand>
        <name>orotate</name>
        <dbReference type="ChEBI" id="CHEBI:30839"/>
    </ligand>
</feature>
<keyword id="KW-0328">Glycosyltransferase</keyword>
<keyword id="KW-0460">Magnesium</keyword>
<keyword id="KW-0665">Pyrimidine biosynthesis</keyword>
<keyword id="KW-0808">Transferase</keyword>
<proteinExistence type="inferred from homology"/>
<sequence>MTDHRTRFLQLALDADALRFGEFTLKSGRLSPYFFNAGRFDSGAKTAQLAQCYADAIDAAGLDFDLLFGPAYKGIPLATALACAYAGRGRDLPLAFNRKEAKDHGEGGTLIGAPLAGRKVLIVDDVITAGTAIREALAIIRAAGGMPSGIVVALDRQEIASDQDRRSAAQAVAAEAGIPVIAVANLGDLLAFAAGNADLVGFQEPLLAYRGRYGTDTTG</sequence>
<protein>
    <recommendedName>
        <fullName evidence="1">Orotate phosphoribosyltransferase</fullName>
        <shortName evidence="1">OPRT</shortName>
        <shortName evidence="1">OPRTase</shortName>
        <ecNumber evidence="1">2.4.2.10</ecNumber>
    </recommendedName>
</protein>